<gene>
    <name evidence="1" type="primary">tpiA</name>
    <name type="ordered locus">M28_Spy0488</name>
</gene>
<evidence type="ECO:0000255" key="1">
    <source>
        <dbReference type="HAMAP-Rule" id="MF_00147"/>
    </source>
</evidence>
<feature type="chain" id="PRO_0000307576" description="Triosephosphate isomerase">
    <location>
        <begin position="1"/>
        <end position="252"/>
    </location>
</feature>
<feature type="active site" description="Electrophile" evidence="1">
    <location>
        <position position="96"/>
    </location>
</feature>
<feature type="active site" description="Proton acceptor" evidence="1">
    <location>
        <position position="168"/>
    </location>
</feature>
<feature type="binding site" evidence="1">
    <location>
        <begin position="10"/>
        <end position="12"/>
    </location>
    <ligand>
        <name>substrate</name>
    </ligand>
</feature>
<feature type="binding site" evidence="1">
    <location>
        <position position="174"/>
    </location>
    <ligand>
        <name>substrate</name>
    </ligand>
</feature>
<feature type="binding site" evidence="1">
    <location>
        <position position="214"/>
    </location>
    <ligand>
        <name>substrate</name>
    </ligand>
</feature>
<feature type="binding site" evidence="1">
    <location>
        <begin position="235"/>
        <end position="236"/>
    </location>
    <ligand>
        <name>substrate</name>
    </ligand>
</feature>
<comment type="function">
    <text evidence="1">Involved in the gluconeogenesis. Catalyzes stereospecifically the conversion of dihydroxyacetone phosphate (DHAP) to D-glyceraldehyde-3-phosphate (G3P).</text>
</comment>
<comment type="catalytic activity">
    <reaction evidence="1">
        <text>D-glyceraldehyde 3-phosphate = dihydroxyacetone phosphate</text>
        <dbReference type="Rhea" id="RHEA:18585"/>
        <dbReference type="ChEBI" id="CHEBI:57642"/>
        <dbReference type="ChEBI" id="CHEBI:59776"/>
        <dbReference type="EC" id="5.3.1.1"/>
    </reaction>
</comment>
<comment type="pathway">
    <text evidence="1">Carbohydrate biosynthesis; gluconeogenesis.</text>
</comment>
<comment type="pathway">
    <text evidence="1">Carbohydrate degradation; glycolysis; D-glyceraldehyde 3-phosphate from glycerone phosphate: step 1/1.</text>
</comment>
<comment type="subunit">
    <text evidence="1">Homodimer.</text>
</comment>
<comment type="subcellular location">
    <subcellularLocation>
        <location evidence="1">Cytoplasm</location>
    </subcellularLocation>
</comment>
<comment type="similarity">
    <text evidence="1">Belongs to the triosephosphate isomerase family.</text>
</comment>
<accession>Q48UK4</accession>
<reference key="1">
    <citation type="journal article" date="2005" name="J. Infect. Dis.">
        <title>Genome sequence of a serotype M28 strain of group A Streptococcus: potential new insights into puerperal sepsis and bacterial disease specificity.</title>
        <authorList>
            <person name="Green N.M."/>
            <person name="Zhang S."/>
            <person name="Porcella S.F."/>
            <person name="Nagiec M.J."/>
            <person name="Barbian K.D."/>
            <person name="Beres S.B."/>
            <person name="Lefebvre R.B."/>
            <person name="Musser J.M."/>
        </authorList>
    </citation>
    <scope>NUCLEOTIDE SEQUENCE [LARGE SCALE GENOMIC DNA]</scope>
    <source>
        <strain>MGAS6180</strain>
    </source>
</reference>
<organism>
    <name type="scientific">Streptococcus pyogenes serotype M28 (strain MGAS6180)</name>
    <dbReference type="NCBI Taxonomy" id="319701"/>
    <lineage>
        <taxon>Bacteria</taxon>
        <taxon>Bacillati</taxon>
        <taxon>Bacillota</taxon>
        <taxon>Bacilli</taxon>
        <taxon>Lactobacillales</taxon>
        <taxon>Streptococcaceae</taxon>
        <taxon>Streptococcus</taxon>
    </lineage>
</organism>
<name>TPIS_STRPM</name>
<keyword id="KW-0963">Cytoplasm</keyword>
<keyword id="KW-0312">Gluconeogenesis</keyword>
<keyword id="KW-0324">Glycolysis</keyword>
<keyword id="KW-0413">Isomerase</keyword>
<dbReference type="EC" id="5.3.1.1" evidence="1"/>
<dbReference type="EMBL" id="CP000056">
    <property type="protein sequence ID" value="AAX71602.1"/>
    <property type="molecule type" value="Genomic_DNA"/>
</dbReference>
<dbReference type="RefSeq" id="WP_002990539.1">
    <property type="nucleotide sequence ID" value="NC_007296.2"/>
</dbReference>
<dbReference type="SMR" id="Q48UK4"/>
<dbReference type="GeneID" id="69901181"/>
<dbReference type="KEGG" id="spb:M28_Spy0488"/>
<dbReference type="HOGENOM" id="CLU_024251_2_3_9"/>
<dbReference type="UniPathway" id="UPA00109">
    <property type="reaction ID" value="UER00189"/>
</dbReference>
<dbReference type="UniPathway" id="UPA00138"/>
<dbReference type="GO" id="GO:0005829">
    <property type="term" value="C:cytosol"/>
    <property type="evidence" value="ECO:0007669"/>
    <property type="project" value="TreeGrafter"/>
</dbReference>
<dbReference type="GO" id="GO:0004807">
    <property type="term" value="F:triose-phosphate isomerase activity"/>
    <property type="evidence" value="ECO:0007669"/>
    <property type="project" value="UniProtKB-UniRule"/>
</dbReference>
<dbReference type="GO" id="GO:0006094">
    <property type="term" value="P:gluconeogenesis"/>
    <property type="evidence" value="ECO:0007669"/>
    <property type="project" value="UniProtKB-UniRule"/>
</dbReference>
<dbReference type="GO" id="GO:0046166">
    <property type="term" value="P:glyceraldehyde-3-phosphate biosynthetic process"/>
    <property type="evidence" value="ECO:0007669"/>
    <property type="project" value="TreeGrafter"/>
</dbReference>
<dbReference type="GO" id="GO:0019563">
    <property type="term" value="P:glycerol catabolic process"/>
    <property type="evidence" value="ECO:0007669"/>
    <property type="project" value="TreeGrafter"/>
</dbReference>
<dbReference type="GO" id="GO:0006096">
    <property type="term" value="P:glycolytic process"/>
    <property type="evidence" value="ECO:0007669"/>
    <property type="project" value="UniProtKB-UniRule"/>
</dbReference>
<dbReference type="CDD" id="cd00311">
    <property type="entry name" value="TIM"/>
    <property type="match status" value="1"/>
</dbReference>
<dbReference type="FunFam" id="3.20.20.70:FF:000016">
    <property type="entry name" value="Triosephosphate isomerase"/>
    <property type="match status" value="1"/>
</dbReference>
<dbReference type="Gene3D" id="3.20.20.70">
    <property type="entry name" value="Aldolase class I"/>
    <property type="match status" value="1"/>
</dbReference>
<dbReference type="HAMAP" id="MF_00147_B">
    <property type="entry name" value="TIM_B"/>
    <property type="match status" value="1"/>
</dbReference>
<dbReference type="InterPro" id="IPR013785">
    <property type="entry name" value="Aldolase_TIM"/>
</dbReference>
<dbReference type="InterPro" id="IPR035990">
    <property type="entry name" value="TIM_sf"/>
</dbReference>
<dbReference type="InterPro" id="IPR022896">
    <property type="entry name" value="TrioseP_Isoase_bac/euk"/>
</dbReference>
<dbReference type="InterPro" id="IPR000652">
    <property type="entry name" value="Triosephosphate_isomerase"/>
</dbReference>
<dbReference type="InterPro" id="IPR020861">
    <property type="entry name" value="Triosephosphate_isomerase_AS"/>
</dbReference>
<dbReference type="NCBIfam" id="TIGR00419">
    <property type="entry name" value="tim"/>
    <property type="match status" value="1"/>
</dbReference>
<dbReference type="PANTHER" id="PTHR21139">
    <property type="entry name" value="TRIOSEPHOSPHATE ISOMERASE"/>
    <property type="match status" value="1"/>
</dbReference>
<dbReference type="PANTHER" id="PTHR21139:SF42">
    <property type="entry name" value="TRIOSEPHOSPHATE ISOMERASE"/>
    <property type="match status" value="1"/>
</dbReference>
<dbReference type="Pfam" id="PF00121">
    <property type="entry name" value="TIM"/>
    <property type="match status" value="1"/>
</dbReference>
<dbReference type="SUPFAM" id="SSF51351">
    <property type="entry name" value="Triosephosphate isomerase (TIM)"/>
    <property type="match status" value="1"/>
</dbReference>
<dbReference type="PROSITE" id="PS00171">
    <property type="entry name" value="TIM_1"/>
    <property type="match status" value="1"/>
</dbReference>
<dbReference type="PROSITE" id="PS51440">
    <property type="entry name" value="TIM_2"/>
    <property type="match status" value="1"/>
</dbReference>
<proteinExistence type="inferred from homology"/>
<sequence length="252" mass="26618">MSRKPIIAGNWKMNKNPQEAKAFVEAVASKLPSTDLVDVAVAAPAVDLVTTIEAAKDSVLKVAAQNCYFENTGAFTGETSPKVLAEMGADYVVIGHSERRDYFHETDEDINKKAKAIFANGLTPIVCCGESLETYEAGKAVEFVGAQVSAALAGLSAEQVASLVLAYEPIWAIGTGKSATQDDAQNMCKAVRDVVAADFGQEVADKVRVQYGGSVKPENVKDYMACPDVDGALVGGASLEADSFLALLDFLN</sequence>
<protein>
    <recommendedName>
        <fullName evidence="1">Triosephosphate isomerase</fullName>
        <shortName evidence="1">TIM</shortName>
        <shortName evidence="1">TPI</shortName>
        <ecNumber evidence="1">5.3.1.1</ecNumber>
    </recommendedName>
    <alternativeName>
        <fullName evidence="1">Triose-phosphate isomerase</fullName>
    </alternativeName>
</protein>